<feature type="chain" id="PRO_1000188418" description="Putative agmatine deiminase">
    <location>
        <begin position="1"/>
        <end position="361"/>
    </location>
</feature>
<feature type="active site" description="Amidino-cysteine intermediate" evidence="1">
    <location>
        <position position="354"/>
    </location>
</feature>
<proteinExistence type="inferred from homology"/>
<accession>B8ZP26</accession>
<sequence>MMDSPKKLGYHMPAEYEPHHGTLMIWPTRPGSWPFQGKAAKRAFTQIIETIAEGERVYLLVEQAYLSEAQSYLGDKVVYLDIPTNDAWARDTGPTILVNDKGKKLAVDWAFNAWGGTYDGLYQDYEEDDQVASRFAEALERPVYDAKPFVLEGGAIHSDGQGTILVTESCLLSPGRNPNLTKEEIENTLLESLGAEKVIWLPYGIYQDETNEHVDNVVAFVGPAEVVLAWTDDENDPQYAMSKADLELLEQETDAKGCHFTIHKLPIPAVRQVVTEEDLPGYIYEEGEEERYAGERLAASYVNFYIANKAVLVPQFEDVNDQVALDILSKCFPDRKVVGIPARDILLGGGNIHCITQQIPE</sequence>
<organism>
    <name type="scientific">Streptococcus pneumoniae (strain ATCC 700669 / Spain 23F-1)</name>
    <dbReference type="NCBI Taxonomy" id="561276"/>
    <lineage>
        <taxon>Bacteria</taxon>
        <taxon>Bacillati</taxon>
        <taxon>Bacillota</taxon>
        <taxon>Bacilli</taxon>
        <taxon>Lactobacillales</taxon>
        <taxon>Streptococcaceae</taxon>
        <taxon>Streptococcus</taxon>
    </lineage>
</organism>
<keyword id="KW-0378">Hydrolase</keyword>
<dbReference type="EC" id="3.5.3.12" evidence="1"/>
<dbReference type="EMBL" id="FM211187">
    <property type="protein sequence ID" value="CAR68677.1"/>
    <property type="molecule type" value="Genomic_DNA"/>
</dbReference>
<dbReference type="RefSeq" id="WP_000969454.1">
    <property type="nucleotide sequence ID" value="NC_011900.1"/>
</dbReference>
<dbReference type="SMR" id="B8ZP26"/>
<dbReference type="KEGG" id="sne:SPN23F08450"/>
<dbReference type="HOGENOM" id="CLU_037682_1_0_9"/>
<dbReference type="GO" id="GO:0047632">
    <property type="term" value="F:agmatine deiminase activity"/>
    <property type="evidence" value="ECO:0007669"/>
    <property type="project" value="UniProtKB-UniRule"/>
</dbReference>
<dbReference type="GO" id="GO:0004668">
    <property type="term" value="F:protein-arginine deiminase activity"/>
    <property type="evidence" value="ECO:0007669"/>
    <property type="project" value="InterPro"/>
</dbReference>
<dbReference type="GO" id="GO:0009446">
    <property type="term" value="P:putrescine biosynthetic process"/>
    <property type="evidence" value="ECO:0007669"/>
    <property type="project" value="InterPro"/>
</dbReference>
<dbReference type="Gene3D" id="3.75.10.10">
    <property type="entry name" value="L-arginine/glycine Amidinotransferase, Chain A"/>
    <property type="match status" value="1"/>
</dbReference>
<dbReference type="HAMAP" id="MF_01841">
    <property type="entry name" value="Agmatine_deimin"/>
    <property type="match status" value="1"/>
</dbReference>
<dbReference type="InterPro" id="IPR017754">
    <property type="entry name" value="Agmatine_deiminase"/>
</dbReference>
<dbReference type="InterPro" id="IPR007466">
    <property type="entry name" value="Peptidyl-Arg-deiminase_porph"/>
</dbReference>
<dbReference type="NCBIfam" id="TIGR03380">
    <property type="entry name" value="agmatine_aguA"/>
    <property type="match status" value="1"/>
</dbReference>
<dbReference type="NCBIfam" id="NF010070">
    <property type="entry name" value="PRK13551.1"/>
    <property type="match status" value="1"/>
</dbReference>
<dbReference type="PANTHER" id="PTHR31377">
    <property type="entry name" value="AGMATINE DEIMINASE-RELATED"/>
    <property type="match status" value="1"/>
</dbReference>
<dbReference type="PANTHER" id="PTHR31377:SF0">
    <property type="entry name" value="AGMATINE DEIMINASE-RELATED"/>
    <property type="match status" value="1"/>
</dbReference>
<dbReference type="Pfam" id="PF04371">
    <property type="entry name" value="PAD_porph"/>
    <property type="match status" value="1"/>
</dbReference>
<dbReference type="SUPFAM" id="SSF55909">
    <property type="entry name" value="Pentein"/>
    <property type="match status" value="1"/>
</dbReference>
<reference key="1">
    <citation type="journal article" date="2009" name="J. Bacteriol.">
        <title>Role of conjugative elements in the evolution of the multidrug-resistant pandemic clone Streptococcus pneumoniae Spain23F ST81.</title>
        <authorList>
            <person name="Croucher N.J."/>
            <person name="Walker D."/>
            <person name="Romero P."/>
            <person name="Lennard N."/>
            <person name="Paterson G.K."/>
            <person name="Bason N.C."/>
            <person name="Mitchell A.M."/>
            <person name="Quail M.A."/>
            <person name="Andrew P.W."/>
            <person name="Parkhill J."/>
            <person name="Bentley S.D."/>
            <person name="Mitchell T.J."/>
        </authorList>
    </citation>
    <scope>NUCLEOTIDE SEQUENCE [LARGE SCALE GENOMIC DNA]</scope>
    <source>
        <strain>ATCC 700669 / Spain 23F-1</strain>
    </source>
</reference>
<evidence type="ECO:0000255" key="1">
    <source>
        <dbReference type="HAMAP-Rule" id="MF_01841"/>
    </source>
</evidence>
<protein>
    <recommendedName>
        <fullName evidence="1">Putative agmatine deiminase</fullName>
        <ecNumber evidence="1">3.5.3.12</ecNumber>
    </recommendedName>
    <alternativeName>
        <fullName evidence="1">Agmatine iminohydrolase</fullName>
    </alternativeName>
</protein>
<gene>
    <name evidence="1" type="primary">aguA</name>
    <name type="ordered locus">SPN23F08450</name>
</gene>
<name>AGUA_STRPJ</name>
<comment type="catalytic activity">
    <reaction evidence="1">
        <text>agmatine + H2O = N-carbamoylputrescine + NH4(+)</text>
        <dbReference type="Rhea" id="RHEA:18037"/>
        <dbReference type="ChEBI" id="CHEBI:15377"/>
        <dbReference type="ChEBI" id="CHEBI:28938"/>
        <dbReference type="ChEBI" id="CHEBI:58145"/>
        <dbReference type="ChEBI" id="CHEBI:58318"/>
        <dbReference type="EC" id="3.5.3.12"/>
    </reaction>
</comment>
<comment type="similarity">
    <text evidence="1">Belongs to the agmatine deiminase family.</text>
</comment>